<reference key="1">
    <citation type="submission" date="2006-12" db="EMBL/GenBank/DDBJ databases">
        <title>Complete sequence of chromosome 1 of Acidovorax sp. JS42.</title>
        <authorList>
            <person name="Copeland A."/>
            <person name="Lucas S."/>
            <person name="Lapidus A."/>
            <person name="Barry K."/>
            <person name="Detter J.C."/>
            <person name="Glavina del Rio T."/>
            <person name="Dalin E."/>
            <person name="Tice H."/>
            <person name="Pitluck S."/>
            <person name="Chertkov O."/>
            <person name="Brettin T."/>
            <person name="Bruce D."/>
            <person name="Han C."/>
            <person name="Tapia R."/>
            <person name="Gilna P."/>
            <person name="Schmutz J."/>
            <person name="Larimer F."/>
            <person name="Land M."/>
            <person name="Hauser L."/>
            <person name="Kyrpides N."/>
            <person name="Kim E."/>
            <person name="Stahl D."/>
            <person name="Richardson P."/>
        </authorList>
    </citation>
    <scope>NUCLEOTIDE SEQUENCE [LARGE SCALE GENOMIC DNA]</scope>
    <source>
        <strain>JS42</strain>
    </source>
</reference>
<accession>A1W2R2</accession>
<gene>
    <name evidence="1" type="primary">rplV</name>
    <name type="ordered locus">Ajs_0283</name>
</gene>
<proteinExistence type="inferred from homology"/>
<organism>
    <name type="scientific">Acidovorax sp. (strain JS42)</name>
    <dbReference type="NCBI Taxonomy" id="232721"/>
    <lineage>
        <taxon>Bacteria</taxon>
        <taxon>Pseudomonadati</taxon>
        <taxon>Pseudomonadota</taxon>
        <taxon>Betaproteobacteria</taxon>
        <taxon>Burkholderiales</taxon>
        <taxon>Comamonadaceae</taxon>
        <taxon>Acidovorax</taxon>
    </lineage>
</organism>
<name>RL22_ACISJ</name>
<protein>
    <recommendedName>
        <fullName evidence="1">Large ribosomal subunit protein uL22</fullName>
    </recommendedName>
    <alternativeName>
        <fullName evidence="2">50S ribosomal protein L22</fullName>
    </alternativeName>
</protein>
<dbReference type="EMBL" id="CP000539">
    <property type="protein sequence ID" value="ABM40537.1"/>
    <property type="molecule type" value="Genomic_DNA"/>
</dbReference>
<dbReference type="SMR" id="A1W2R2"/>
<dbReference type="STRING" id="232721.Ajs_0283"/>
<dbReference type="KEGG" id="ajs:Ajs_0283"/>
<dbReference type="eggNOG" id="COG0091">
    <property type="taxonomic scope" value="Bacteria"/>
</dbReference>
<dbReference type="HOGENOM" id="CLU_083987_3_3_4"/>
<dbReference type="Proteomes" id="UP000000645">
    <property type="component" value="Chromosome"/>
</dbReference>
<dbReference type="GO" id="GO:0022625">
    <property type="term" value="C:cytosolic large ribosomal subunit"/>
    <property type="evidence" value="ECO:0007669"/>
    <property type="project" value="TreeGrafter"/>
</dbReference>
<dbReference type="GO" id="GO:0019843">
    <property type="term" value="F:rRNA binding"/>
    <property type="evidence" value="ECO:0007669"/>
    <property type="project" value="UniProtKB-UniRule"/>
</dbReference>
<dbReference type="GO" id="GO:0003735">
    <property type="term" value="F:structural constituent of ribosome"/>
    <property type="evidence" value="ECO:0007669"/>
    <property type="project" value="InterPro"/>
</dbReference>
<dbReference type="GO" id="GO:0006412">
    <property type="term" value="P:translation"/>
    <property type="evidence" value="ECO:0007669"/>
    <property type="project" value="UniProtKB-UniRule"/>
</dbReference>
<dbReference type="CDD" id="cd00336">
    <property type="entry name" value="Ribosomal_L22"/>
    <property type="match status" value="1"/>
</dbReference>
<dbReference type="FunFam" id="3.90.470.10:FF:000001">
    <property type="entry name" value="50S ribosomal protein L22"/>
    <property type="match status" value="1"/>
</dbReference>
<dbReference type="Gene3D" id="3.90.470.10">
    <property type="entry name" value="Ribosomal protein L22/L17"/>
    <property type="match status" value="1"/>
</dbReference>
<dbReference type="HAMAP" id="MF_01331_B">
    <property type="entry name" value="Ribosomal_uL22_B"/>
    <property type="match status" value="1"/>
</dbReference>
<dbReference type="InterPro" id="IPR001063">
    <property type="entry name" value="Ribosomal_uL22"/>
</dbReference>
<dbReference type="InterPro" id="IPR005727">
    <property type="entry name" value="Ribosomal_uL22_bac/chlpt-type"/>
</dbReference>
<dbReference type="InterPro" id="IPR047867">
    <property type="entry name" value="Ribosomal_uL22_bac/org-type"/>
</dbReference>
<dbReference type="InterPro" id="IPR018260">
    <property type="entry name" value="Ribosomal_uL22_CS"/>
</dbReference>
<dbReference type="InterPro" id="IPR036394">
    <property type="entry name" value="Ribosomal_uL22_sf"/>
</dbReference>
<dbReference type="NCBIfam" id="TIGR01044">
    <property type="entry name" value="rplV_bact"/>
    <property type="match status" value="1"/>
</dbReference>
<dbReference type="PANTHER" id="PTHR13501">
    <property type="entry name" value="CHLOROPLAST 50S RIBOSOMAL PROTEIN L22-RELATED"/>
    <property type="match status" value="1"/>
</dbReference>
<dbReference type="PANTHER" id="PTHR13501:SF8">
    <property type="entry name" value="LARGE RIBOSOMAL SUBUNIT PROTEIN UL22M"/>
    <property type="match status" value="1"/>
</dbReference>
<dbReference type="Pfam" id="PF00237">
    <property type="entry name" value="Ribosomal_L22"/>
    <property type="match status" value="1"/>
</dbReference>
<dbReference type="SUPFAM" id="SSF54843">
    <property type="entry name" value="Ribosomal protein L22"/>
    <property type="match status" value="1"/>
</dbReference>
<dbReference type="PROSITE" id="PS00464">
    <property type="entry name" value="RIBOSOMAL_L22"/>
    <property type="match status" value="1"/>
</dbReference>
<comment type="function">
    <text evidence="1">This protein binds specifically to 23S rRNA; its binding is stimulated by other ribosomal proteins, e.g. L4, L17, and L20. It is important during the early stages of 50S assembly. It makes multiple contacts with different domains of the 23S rRNA in the assembled 50S subunit and ribosome (By similarity).</text>
</comment>
<comment type="function">
    <text evidence="1">The globular domain of the protein is located near the polypeptide exit tunnel on the outside of the subunit, while an extended beta-hairpin is found that lines the wall of the exit tunnel in the center of the 70S ribosome.</text>
</comment>
<comment type="subunit">
    <text evidence="1">Part of the 50S ribosomal subunit.</text>
</comment>
<comment type="similarity">
    <text evidence="1">Belongs to the universal ribosomal protein uL22 family.</text>
</comment>
<evidence type="ECO:0000255" key="1">
    <source>
        <dbReference type="HAMAP-Rule" id="MF_01331"/>
    </source>
</evidence>
<evidence type="ECO:0000305" key="2"/>
<keyword id="KW-0687">Ribonucleoprotein</keyword>
<keyword id="KW-0689">Ribosomal protein</keyword>
<keyword id="KW-0694">RNA-binding</keyword>
<keyword id="KW-0699">rRNA-binding</keyword>
<feature type="chain" id="PRO_0000354442" description="Large ribosomal subunit protein uL22">
    <location>
        <begin position="1"/>
        <end position="110"/>
    </location>
</feature>
<sequence>MSETRAVLRGVRLSVDKGRLVADLIRGKKVDQALNILAFTQKKAAVIVKKVLESAIANAEHNDGADIDDLKVKTIFVEQGTTLKRFTARAKGRGNRISKPTCHIYVTVGN</sequence>